<keyword id="KW-0067">ATP-binding</keyword>
<keyword id="KW-0963">Cytoplasm</keyword>
<keyword id="KW-0238">DNA-binding</keyword>
<keyword id="KW-0413">Isomerase</keyword>
<keyword id="KW-0547">Nucleotide-binding</keyword>
<keyword id="KW-0799">Topoisomerase</keyword>
<reference key="1">
    <citation type="journal article" date="1999" name="Int. J. Syst. Bacteriol.">
        <title>Phylogenetic structures of the genus Acinetobacter based on gyrB sequences: comparison with the grouping by DNA-DNA hybridization.</title>
        <authorList>
            <person name="Yamamoto S."/>
            <person name="Bouvet P.J.M."/>
            <person name="Harayama S."/>
        </authorList>
    </citation>
    <scope>NUCLEOTIDE SEQUENCE [GENOMIC DNA]</scope>
    <source>
        <strain>ATCC 9957 / CCUG 61662 / CIP 70.31 / LMG 985 / B25</strain>
    </source>
</reference>
<reference key="2">
    <citation type="journal article" date="1996" name="Int. J. Syst. Bacteriol.">
        <title>Phylogenetic analysis of Acinetobacter strains based on the nucleotide sequences of gyrB genes and on the amino acid sequences of their products.</title>
        <authorList>
            <person name="Yamamoto S."/>
            <person name="Harayama S."/>
        </authorList>
    </citation>
    <scope>NUCLEOTIDE SEQUENCE [GENOMIC DNA] OF 3-118 AND 290-389</scope>
    <source>
        <strain>ATCC 9957 / CCUG 61662 / CIP 70.31 / LMG 985 / B25</strain>
    </source>
</reference>
<gene>
    <name type="primary">gyrB</name>
</gene>
<evidence type="ECO:0000250" key="1">
    <source>
        <dbReference type="UniProtKB" id="P0AES6"/>
    </source>
</evidence>
<evidence type="ECO:0000255" key="2">
    <source>
        <dbReference type="PROSITE-ProRule" id="PRU00995"/>
    </source>
</evidence>
<evidence type="ECO:0000305" key="3"/>
<accession>Q44272</accession>
<accession>Q59147</accession>
<accession>Q9ZA06</accession>
<feature type="chain" id="PRO_0000145282" description="DNA gyrase subunit B">
    <location>
        <begin position="1" status="less than"/>
        <end position="390" status="greater than"/>
    </location>
</feature>
<feature type="domain" description="Toprim" evidence="2">
    <location>
        <begin position="313"/>
        <end position="390" status="greater than"/>
    </location>
</feature>
<feature type="site" description="Interaction with DNA" evidence="2">
    <location>
        <position position="344"/>
    </location>
</feature>
<feature type="site" description="Interaction with DNA" evidence="2">
    <location>
        <position position="347"/>
    </location>
</feature>
<feature type="sequence conflict" description="In Ref. 2; BAA11160." evidence="3" ref="2">
    <original>F</original>
    <variation>L</variation>
    <location>
        <position position="90"/>
    </location>
</feature>
<feature type="non-terminal residue">
    <location>
        <position position="1"/>
    </location>
</feature>
<feature type="non-terminal residue">
    <location>
        <position position="390"/>
    </location>
</feature>
<protein>
    <recommendedName>
        <fullName>DNA gyrase subunit B</fullName>
        <ecNumber evidence="2">5.6.2.2</ecNumber>
    </recommendedName>
</protein>
<dbReference type="EC" id="5.6.2.2" evidence="2"/>
<dbReference type="EMBL" id="AB008688">
    <property type="protein sequence ID" value="BAA75405.1"/>
    <property type="molecule type" value="Genomic_DNA"/>
</dbReference>
<dbReference type="EMBL" id="D73435">
    <property type="protein sequence ID" value="BAA11160.1"/>
    <property type="molecule type" value="Genomic_DNA"/>
</dbReference>
<dbReference type="EMBL" id="D73420">
    <property type="protein sequence ID" value="BAA11145.1"/>
    <property type="molecule type" value="Genomic_DNA"/>
</dbReference>
<dbReference type="SMR" id="Q44272"/>
<dbReference type="GO" id="GO:0005737">
    <property type="term" value="C:cytoplasm"/>
    <property type="evidence" value="ECO:0007669"/>
    <property type="project" value="UniProtKB-SubCell"/>
</dbReference>
<dbReference type="GO" id="GO:0005524">
    <property type="term" value="F:ATP binding"/>
    <property type="evidence" value="ECO:0007669"/>
    <property type="project" value="UniProtKB-KW"/>
</dbReference>
<dbReference type="GO" id="GO:0003677">
    <property type="term" value="F:DNA binding"/>
    <property type="evidence" value="ECO:0007669"/>
    <property type="project" value="UniProtKB-KW"/>
</dbReference>
<dbReference type="GO" id="GO:0003918">
    <property type="term" value="F:DNA topoisomerase type II (double strand cut, ATP-hydrolyzing) activity"/>
    <property type="evidence" value="ECO:0007669"/>
    <property type="project" value="UniProtKB-EC"/>
</dbReference>
<dbReference type="GO" id="GO:0006265">
    <property type="term" value="P:DNA topological change"/>
    <property type="evidence" value="ECO:0007669"/>
    <property type="project" value="InterPro"/>
</dbReference>
<dbReference type="CDD" id="cd00822">
    <property type="entry name" value="TopoII_Trans_DNA_gyrase"/>
    <property type="match status" value="1"/>
</dbReference>
<dbReference type="FunFam" id="3.30.230.10:FF:000005">
    <property type="entry name" value="DNA gyrase subunit B"/>
    <property type="match status" value="1"/>
</dbReference>
<dbReference type="Gene3D" id="3.30.230.10">
    <property type="match status" value="1"/>
</dbReference>
<dbReference type="Gene3D" id="3.40.50.670">
    <property type="match status" value="1"/>
</dbReference>
<dbReference type="Gene3D" id="3.30.565.10">
    <property type="entry name" value="Histidine kinase-like ATPase, C-terminal domain"/>
    <property type="match status" value="1"/>
</dbReference>
<dbReference type="InterPro" id="IPR036890">
    <property type="entry name" value="HATPase_C_sf"/>
</dbReference>
<dbReference type="InterPro" id="IPR020568">
    <property type="entry name" value="Ribosomal_Su5_D2-typ_SF"/>
</dbReference>
<dbReference type="InterPro" id="IPR014721">
    <property type="entry name" value="Ribsml_uS5_D2-typ_fold_subgr"/>
</dbReference>
<dbReference type="InterPro" id="IPR001241">
    <property type="entry name" value="Topo_IIA"/>
</dbReference>
<dbReference type="InterPro" id="IPR013760">
    <property type="entry name" value="Topo_IIA-like_dom_sf"/>
</dbReference>
<dbReference type="InterPro" id="IPR000565">
    <property type="entry name" value="Topo_IIA_B"/>
</dbReference>
<dbReference type="InterPro" id="IPR013759">
    <property type="entry name" value="Topo_IIA_B_C"/>
</dbReference>
<dbReference type="InterPro" id="IPR013506">
    <property type="entry name" value="Topo_IIA_bsu_dom2"/>
</dbReference>
<dbReference type="InterPro" id="IPR018522">
    <property type="entry name" value="TopoIIA_CS"/>
</dbReference>
<dbReference type="InterPro" id="IPR006171">
    <property type="entry name" value="TOPRIM_dom"/>
</dbReference>
<dbReference type="PANTHER" id="PTHR45866:SF1">
    <property type="entry name" value="DNA GYRASE SUBUNIT B, MITOCHONDRIAL"/>
    <property type="match status" value="1"/>
</dbReference>
<dbReference type="PANTHER" id="PTHR45866">
    <property type="entry name" value="DNA GYRASE/TOPOISOMERASE SUBUNIT B"/>
    <property type="match status" value="1"/>
</dbReference>
<dbReference type="Pfam" id="PF00204">
    <property type="entry name" value="DNA_gyraseB"/>
    <property type="match status" value="1"/>
</dbReference>
<dbReference type="Pfam" id="PF01751">
    <property type="entry name" value="Toprim"/>
    <property type="match status" value="1"/>
</dbReference>
<dbReference type="PRINTS" id="PR01159">
    <property type="entry name" value="DNAGYRASEB"/>
</dbReference>
<dbReference type="PRINTS" id="PR00418">
    <property type="entry name" value="TPI2FAMILY"/>
</dbReference>
<dbReference type="SMART" id="SM00433">
    <property type="entry name" value="TOP2c"/>
    <property type="match status" value="1"/>
</dbReference>
<dbReference type="SUPFAM" id="SSF55874">
    <property type="entry name" value="ATPase domain of HSP90 chaperone/DNA topoisomerase II/histidine kinase"/>
    <property type="match status" value="1"/>
</dbReference>
<dbReference type="SUPFAM" id="SSF54211">
    <property type="entry name" value="Ribosomal protein S5 domain 2-like"/>
    <property type="match status" value="1"/>
</dbReference>
<dbReference type="SUPFAM" id="SSF56719">
    <property type="entry name" value="Type II DNA topoisomerase"/>
    <property type="match status" value="1"/>
</dbReference>
<dbReference type="PROSITE" id="PS00177">
    <property type="entry name" value="TOPOISOMERASE_II"/>
    <property type="match status" value="1"/>
</dbReference>
<dbReference type="PROSITE" id="PS50880">
    <property type="entry name" value="TOPRIM"/>
    <property type="match status" value="1"/>
</dbReference>
<name>GYRB2_ACILW</name>
<organism>
    <name type="scientific">Acinetobacter lwoffii</name>
    <dbReference type="NCBI Taxonomy" id="28090"/>
    <lineage>
        <taxon>Bacteria</taxon>
        <taxon>Pseudomonadati</taxon>
        <taxon>Pseudomonadota</taxon>
        <taxon>Gammaproteobacteria</taxon>
        <taxon>Moraxellales</taxon>
        <taxon>Moraxellaceae</taxon>
        <taxon>Acinetobacter</taxon>
    </lineage>
</organism>
<proteinExistence type="inferred from homology"/>
<sequence>DNSYKVSGGLHGVGVSVVNALSEKLELTIHRAGKIHEQEYRHGDSQYPLKVVGDTNRTGTRVRFWPSAETFSQTIFNVDILARRLRELSFLNAGVRIVLRDERINAEHVFDYEGGLSEFVKYINEGKTHLNDIFHFTAAQADNGITVEVALQWNDSYQENVRCFTNNIPQKDGGTHLAGFRAALTRGLNNYMDSENILKKEKVAVSGDDAREGLTAIVSVKVPDPKFSSQTKEKLVSSEVKTAVEQAMNKAFSEYLLENPQAAKAIAGKIIDAARARDAARKAREMTRRKSALDIAGLPGKLADCQEKDPALSELYLVEGDSAGGSAKQGRNRKMQAILPLKGKILNVERARFDRMISSAEVGTLITALGCGIGREEYNPDKLRYHKIII</sequence>
<comment type="function">
    <text evidence="1">A type II topoisomerase that negatively supercoils closed circular double-stranded (ds) DNA in an ATP-dependent manner to modulate DNA topology and maintain chromosomes in an underwound state. Negative supercoiling favors strand separation, and DNA replication, transcription, recombination and repair, all of which involve strand separation. Also able to catalyze the interconversion of other topological isomers of dsDNA rings, including catenanes and knotted rings. Type II topoisomerases break and join 2 DNA strands simultaneously in an ATP-dependent manner.</text>
</comment>
<comment type="catalytic activity">
    <reaction evidence="2">
        <text>ATP-dependent breakage, passage and rejoining of double-stranded DNA.</text>
        <dbReference type="EC" id="5.6.2.2"/>
    </reaction>
</comment>
<comment type="subunit">
    <text evidence="1">Heterotetramer, composed of two GyrA and two GyrB chains. In the heterotetramer, GyrA contains the active site tyrosine that forms a transient covalent intermediate with DNA, while GyrB binds cofactors and catalyzes ATP hydrolysis.</text>
</comment>
<comment type="subcellular location">
    <subcellularLocation>
        <location evidence="1">Cytoplasm</location>
    </subcellularLocation>
</comment>
<comment type="miscellaneous">
    <text evidence="1">Few gyrases are as efficient as E.coli at forming negative supercoils. Not all organisms have 2 type II topoisomerases; in organisms with a single type II topoisomerase this enzyme also has to decatenate newly replicated chromosomes.</text>
</comment>
<comment type="similarity">
    <text evidence="3">Belongs to the type II topoisomerase GyrB family.</text>
</comment>